<feature type="signal peptide" evidence="5">
    <location>
        <begin position="1"/>
        <end position="25"/>
    </location>
</feature>
<feature type="chain" id="PRO_0000260348" description="Protein Wnt-2">
    <location>
        <begin position="26"/>
        <end position="360"/>
    </location>
</feature>
<feature type="lipid moiety-binding region" description="O-palmitoleoyl serine; by PORCN" evidence="4">
    <location>
        <position position="212"/>
    </location>
</feature>
<feature type="glycosylation site" description="N-linked (GlcNAc...) asparagine" evidence="5">
    <location>
        <position position="295"/>
    </location>
</feature>
<feature type="disulfide bond" evidence="3">
    <location>
        <begin position="76"/>
        <end position="87"/>
    </location>
</feature>
<feature type="disulfide bond" evidence="3">
    <location>
        <begin position="127"/>
        <end position="135"/>
    </location>
</feature>
<feature type="disulfide bond" evidence="3">
    <location>
        <begin position="137"/>
        <end position="157"/>
    </location>
</feature>
<feature type="disulfide bond" evidence="3">
    <location>
        <begin position="206"/>
        <end position="220"/>
    </location>
</feature>
<feature type="disulfide bond" evidence="3">
    <location>
        <begin position="208"/>
        <end position="215"/>
    </location>
</feature>
<feature type="disulfide bond" evidence="3">
    <location>
        <begin position="278"/>
        <end position="309"/>
    </location>
</feature>
<feature type="disulfide bond" evidence="3">
    <location>
        <begin position="294"/>
        <end position="304"/>
    </location>
</feature>
<feature type="disulfide bond" evidence="3">
    <location>
        <begin position="308"/>
        <end position="348"/>
    </location>
</feature>
<feature type="disulfide bond" evidence="3">
    <location>
        <begin position="324"/>
        <end position="339"/>
    </location>
</feature>
<feature type="disulfide bond" evidence="3">
    <location>
        <begin position="326"/>
        <end position="336"/>
    </location>
</feature>
<feature type="disulfide bond" evidence="3">
    <location>
        <begin position="331"/>
        <end position="332"/>
    </location>
</feature>
<evidence type="ECO:0000250" key="1"/>
<evidence type="ECO:0000250" key="2">
    <source>
        <dbReference type="UniProtKB" id="P27467"/>
    </source>
</evidence>
<evidence type="ECO:0000250" key="3">
    <source>
        <dbReference type="UniProtKB" id="P28026"/>
    </source>
</evidence>
<evidence type="ECO:0000250" key="4">
    <source>
        <dbReference type="UniProtKB" id="P56704"/>
    </source>
</evidence>
<evidence type="ECO:0000255" key="5"/>
<evidence type="ECO:0000305" key="6"/>
<sequence>MNAPLGGIWLGLPLLLTWLSPEVSSSWWYMRATGDSSRVMCDNVPGLVSRQRQLCHRHPDVMRAIGLGVAEWTAECQYQFRQHRWNCNTLDRDHGLFGRVLLRSSRESAFVYAISSAGVVFAITRACSQGELKSCSCDPKKKGTAKDSKGTFDWGGCSDNIDYGIKFARAFVDAKERKGKDARALMNLHNNRAGRKAVKRFLKQECKCHGVSGSCTLRTCWLAMADFRKTGDYLWRKYNGAIQVVMNQDGTGFTVANKRFKKPTKNDLVYFENSPDYCIRDREAGSPGTAGRVCNLTSRGMDSCEVMCCGRGYDTSRVTRMTKCECKFHWCCAVRCQDCLEALDVHTCKAPKSADWTTPT</sequence>
<accession>Q09YN1</accession>
<name>WNT2_RABIT</name>
<keyword id="KW-0217">Developmental protein</keyword>
<keyword id="KW-1015">Disulfide bond</keyword>
<keyword id="KW-0272">Extracellular matrix</keyword>
<keyword id="KW-0325">Glycoprotein</keyword>
<keyword id="KW-0449">Lipoprotein</keyword>
<keyword id="KW-1185">Reference proteome</keyword>
<keyword id="KW-0964">Secreted</keyword>
<keyword id="KW-0732">Signal</keyword>
<keyword id="KW-0879">Wnt signaling pathway</keyword>
<proteinExistence type="inferred from homology"/>
<dbReference type="EMBL" id="DP000006">
    <property type="protein sequence ID" value="AAY89016.1"/>
    <property type="molecule type" value="Genomic_DNA"/>
</dbReference>
<dbReference type="RefSeq" id="NP_001164513.1">
    <property type="nucleotide sequence ID" value="NM_001171042.1"/>
</dbReference>
<dbReference type="SMR" id="Q09YN1"/>
<dbReference type="FunCoup" id="Q09YN1">
    <property type="interactions" value="18"/>
</dbReference>
<dbReference type="STRING" id="9986.ENSOCUP00000013896"/>
<dbReference type="GlyCosmos" id="Q09YN1">
    <property type="glycosylation" value="1 site, No reported glycans"/>
</dbReference>
<dbReference type="PaxDb" id="9986-ENSOCUP00000013896"/>
<dbReference type="GeneID" id="100126569"/>
<dbReference type="KEGG" id="ocu:100126569"/>
<dbReference type="CTD" id="7472"/>
<dbReference type="eggNOG" id="KOG3913">
    <property type="taxonomic scope" value="Eukaryota"/>
</dbReference>
<dbReference type="InParanoid" id="Q09YN1"/>
<dbReference type="OrthoDB" id="5945655at2759"/>
<dbReference type="Proteomes" id="UP000001811">
    <property type="component" value="Unplaced"/>
</dbReference>
<dbReference type="GO" id="GO:0005615">
    <property type="term" value="C:extracellular space"/>
    <property type="evidence" value="ECO:0007669"/>
    <property type="project" value="TreeGrafter"/>
</dbReference>
<dbReference type="GO" id="GO:0005125">
    <property type="term" value="F:cytokine activity"/>
    <property type="evidence" value="ECO:0007669"/>
    <property type="project" value="TreeGrafter"/>
</dbReference>
<dbReference type="GO" id="GO:0005109">
    <property type="term" value="F:frizzled binding"/>
    <property type="evidence" value="ECO:0007669"/>
    <property type="project" value="TreeGrafter"/>
</dbReference>
<dbReference type="GO" id="GO:0048513">
    <property type="term" value="P:animal organ development"/>
    <property type="evidence" value="ECO:0007669"/>
    <property type="project" value="UniProtKB-ARBA"/>
</dbReference>
<dbReference type="GO" id="GO:0060070">
    <property type="term" value="P:canonical Wnt signaling pathway"/>
    <property type="evidence" value="ECO:0007669"/>
    <property type="project" value="TreeGrafter"/>
</dbReference>
<dbReference type="GO" id="GO:0045165">
    <property type="term" value="P:cell fate commitment"/>
    <property type="evidence" value="ECO:0007669"/>
    <property type="project" value="TreeGrafter"/>
</dbReference>
<dbReference type="GO" id="GO:0030182">
    <property type="term" value="P:neuron differentiation"/>
    <property type="evidence" value="ECO:0007669"/>
    <property type="project" value="TreeGrafter"/>
</dbReference>
<dbReference type="CDD" id="cd19345">
    <property type="entry name" value="Wnt_Wnt2"/>
    <property type="match status" value="1"/>
</dbReference>
<dbReference type="FunFam" id="3.30.2460.20:FF:000001">
    <property type="entry name" value="Wnt homolog"/>
    <property type="match status" value="1"/>
</dbReference>
<dbReference type="Gene3D" id="3.30.2460.20">
    <property type="match status" value="1"/>
</dbReference>
<dbReference type="InterPro" id="IPR005817">
    <property type="entry name" value="Wnt"/>
</dbReference>
<dbReference type="InterPro" id="IPR009140">
    <property type="entry name" value="Wnt2"/>
</dbReference>
<dbReference type="InterPro" id="IPR043158">
    <property type="entry name" value="Wnt_C"/>
</dbReference>
<dbReference type="InterPro" id="IPR018161">
    <property type="entry name" value="Wnt_CS"/>
</dbReference>
<dbReference type="PANTHER" id="PTHR12027:SF86">
    <property type="entry name" value="PROTEIN WNT-2"/>
    <property type="match status" value="1"/>
</dbReference>
<dbReference type="PANTHER" id="PTHR12027">
    <property type="entry name" value="WNT RELATED"/>
    <property type="match status" value="1"/>
</dbReference>
<dbReference type="Pfam" id="PF00110">
    <property type="entry name" value="wnt"/>
    <property type="match status" value="1"/>
</dbReference>
<dbReference type="PRINTS" id="PR01842">
    <property type="entry name" value="WNT2PROTEIN"/>
</dbReference>
<dbReference type="PRINTS" id="PR01349">
    <property type="entry name" value="WNTPROTEIN"/>
</dbReference>
<dbReference type="SMART" id="SM00097">
    <property type="entry name" value="WNT1"/>
    <property type="match status" value="1"/>
</dbReference>
<dbReference type="PROSITE" id="PS00246">
    <property type="entry name" value="WNT1"/>
    <property type="match status" value="1"/>
</dbReference>
<comment type="function">
    <text evidence="1">Ligand for members of the frizzled family of seven transmembrane receptors. Probable developmental protein. May be a signaling molecule which affects the development of discrete regions of tissues. Is likely to signal over only few cell diameters (By similarity).</text>
</comment>
<comment type="subcellular location">
    <subcellularLocation>
        <location evidence="1">Secreted</location>
        <location evidence="1">Extracellular space</location>
        <location evidence="1">Extracellular matrix</location>
    </subcellularLocation>
</comment>
<comment type="PTM">
    <text evidence="2 4">Palmitoleoylation is required for efficient binding to frizzled receptors. Depalmitoleoylation leads to Wnt signaling pathway inhibition.</text>
</comment>
<comment type="similarity">
    <text evidence="6">Belongs to the Wnt family.</text>
</comment>
<gene>
    <name type="primary">WNT2</name>
</gene>
<reference key="1">
    <citation type="submission" date="2006-09" db="EMBL/GenBank/DDBJ databases">
        <title>NISC comparative sequencing initiative.</title>
        <authorList>
            <person name="Antonellis A."/>
            <person name="Ayele K."/>
            <person name="Benjamin B."/>
            <person name="Blakesley R.W."/>
            <person name="Boakye A."/>
            <person name="Bouffard G.G."/>
            <person name="Brinkley C."/>
            <person name="Brooks S."/>
            <person name="Chu G."/>
            <person name="Coleman H."/>
            <person name="Engle J."/>
            <person name="Gestole M."/>
            <person name="Greene A."/>
            <person name="Guan X."/>
            <person name="Gupta J."/>
            <person name="Haghighi P."/>
            <person name="Han J."/>
            <person name="Hansen N."/>
            <person name="Ho S.-L."/>
            <person name="Hu P."/>
            <person name="Hunter G."/>
            <person name="Hurle B."/>
            <person name="Idol J.R."/>
            <person name="Kwong P."/>
            <person name="Laric P."/>
            <person name="Larson S."/>
            <person name="Lee-Lin S.-Q."/>
            <person name="Legaspi R."/>
            <person name="Madden M."/>
            <person name="Maduro Q.L."/>
            <person name="Maduro V.B."/>
            <person name="Margulies E.H."/>
            <person name="Masiello C."/>
            <person name="Maskeri B."/>
            <person name="McDowell J."/>
            <person name="Mojidi H.A."/>
            <person name="Mullikin J.C."/>
            <person name="Oestreicher J.S."/>
            <person name="Park M."/>
            <person name="Portnoy M.E."/>
            <person name="Prasad A."/>
            <person name="Puri O."/>
            <person name="Reddix-Dugue N."/>
            <person name="Schandler K."/>
            <person name="Schueler M.G."/>
            <person name="Sison C."/>
            <person name="Stantripop S."/>
            <person name="Stephen E."/>
            <person name="Taye A."/>
            <person name="Thomas J.W."/>
            <person name="Thomas P.J."/>
            <person name="Tsipouri V."/>
            <person name="Ung L."/>
            <person name="Vogt J.L."/>
            <person name="Wetherby K.D."/>
            <person name="Young A."/>
            <person name="Green E.D."/>
        </authorList>
    </citation>
    <scope>NUCLEOTIDE SEQUENCE [LARGE SCALE GENOMIC DNA]</scope>
</reference>
<protein>
    <recommendedName>
        <fullName>Protein Wnt-2</fullName>
    </recommendedName>
</protein>
<organism>
    <name type="scientific">Oryctolagus cuniculus</name>
    <name type="common">Rabbit</name>
    <dbReference type="NCBI Taxonomy" id="9986"/>
    <lineage>
        <taxon>Eukaryota</taxon>
        <taxon>Metazoa</taxon>
        <taxon>Chordata</taxon>
        <taxon>Craniata</taxon>
        <taxon>Vertebrata</taxon>
        <taxon>Euteleostomi</taxon>
        <taxon>Mammalia</taxon>
        <taxon>Eutheria</taxon>
        <taxon>Euarchontoglires</taxon>
        <taxon>Glires</taxon>
        <taxon>Lagomorpha</taxon>
        <taxon>Leporidae</taxon>
        <taxon>Oryctolagus</taxon>
    </lineage>
</organism>